<dbReference type="EC" id="3.11.1.1" evidence="1"/>
<dbReference type="EMBL" id="CP001176">
    <property type="protein sequence ID" value="ACK61646.1"/>
    <property type="molecule type" value="Genomic_DNA"/>
</dbReference>
<dbReference type="RefSeq" id="WP_000687383.1">
    <property type="nucleotide sequence ID" value="NC_011725.1"/>
</dbReference>
<dbReference type="SMR" id="B7HH80"/>
<dbReference type="KEGG" id="bcb:BCB4264_A1377"/>
<dbReference type="HOGENOM" id="CLU_045011_12_0_9"/>
<dbReference type="Proteomes" id="UP000007096">
    <property type="component" value="Chromosome"/>
</dbReference>
<dbReference type="GO" id="GO:0005829">
    <property type="term" value="C:cytosol"/>
    <property type="evidence" value="ECO:0007669"/>
    <property type="project" value="TreeGrafter"/>
</dbReference>
<dbReference type="GO" id="GO:0000287">
    <property type="term" value="F:magnesium ion binding"/>
    <property type="evidence" value="ECO:0007669"/>
    <property type="project" value="UniProtKB-UniRule"/>
</dbReference>
<dbReference type="GO" id="GO:0008967">
    <property type="term" value="F:phosphoglycolate phosphatase activity"/>
    <property type="evidence" value="ECO:0007669"/>
    <property type="project" value="TreeGrafter"/>
</dbReference>
<dbReference type="GO" id="GO:0050194">
    <property type="term" value="F:phosphonoacetaldehyde hydrolase activity"/>
    <property type="evidence" value="ECO:0007669"/>
    <property type="project" value="UniProtKB-UniRule"/>
</dbReference>
<dbReference type="GO" id="GO:0006281">
    <property type="term" value="P:DNA repair"/>
    <property type="evidence" value="ECO:0007669"/>
    <property type="project" value="TreeGrafter"/>
</dbReference>
<dbReference type="GO" id="GO:0019700">
    <property type="term" value="P:organic phosphonate catabolic process"/>
    <property type="evidence" value="ECO:0007669"/>
    <property type="project" value="InterPro"/>
</dbReference>
<dbReference type="CDD" id="cd02586">
    <property type="entry name" value="HAD_PHN"/>
    <property type="match status" value="1"/>
</dbReference>
<dbReference type="FunFam" id="1.10.150.240:FF:000006">
    <property type="entry name" value="Phosphonoacetaldehyde hydrolase"/>
    <property type="match status" value="1"/>
</dbReference>
<dbReference type="FunFam" id="3.40.50.1000:FF:000072">
    <property type="entry name" value="Phosphonoacetaldehyde hydrolase"/>
    <property type="match status" value="1"/>
</dbReference>
<dbReference type="Gene3D" id="3.40.50.1000">
    <property type="entry name" value="HAD superfamily/HAD-like"/>
    <property type="match status" value="1"/>
</dbReference>
<dbReference type="Gene3D" id="1.10.150.240">
    <property type="entry name" value="Putative phosphatase, domain 2"/>
    <property type="match status" value="1"/>
</dbReference>
<dbReference type="HAMAP" id="MF_01375">
    <property type="entry name" value="PhnX"/>
    <property type="match status" value="1"/>
</dbReference>
<dbReference type="InterPro" id="IPR050155">
    <property type="entry name" value="HAD-like_hydrolase_sf"/>
</dbReference>
<dbReference type="InterPro" id="IPR036412">
    <property type="entry name" value="HAD-like_sf"/>
</dbReference>
<dbReference type="InterPro" id="IPR006439">
    <property type="entry name" value="HAD-SF_hydro_IA"/>
</dbReference>
<dbReference type="InterPro" id="IPR041492">
    <property type="entry name" value="HAD_2"/>
</dbReference>
<dbReference type="InterPro" id="IPR023214">
    <property type="entry name" value="HAD_sf"/>
</dbReference>
<dbReference type="InterPro" id="IPR023198">
    <property type="entry name" value="PGP-like_dom2"/>
</dbReference>
<dbReference type="InterPro" id="IPR006323">
    <property type="entry name" value="Phosphonoacetald_hydro"/>
</dbReference>
<dbReference type="NCBIfam" id="TIGR01549">
    <property type="entry name" value="HAD-SF-IA-v1"/>
    <property type="match status" value="1"/>
</dbReference>
<dbReference type="NCBIfam" id="TIGR01509">
    <property type="entry name" value="HAD-SF-IA-v3"/>
    <property type="match status" value="1"/>
</dbReference>
<dbReference type="NCBIfam" id="TIGR01422">
    <property type="entry name" value="phosphonatase"/>
    <property type="match status" value="1"/>
</dbReference>
<dbReference type="PANTHER" id="PTHR43434">
    <property type="entry name" value="PHOSPHOGLYCOLATE PHOSPHATASE"/>
    <property type="match status" value="1"/>
</dbReference>
<dbReference type="PANTHER" id="PTHR43434:SF19">
    <property type="entry name" value="PHOSPHONOACETALDEHYDE HYDROLASE"/>
    <property type="match status" value="1"/>
</dbReference>
<dbReference type="Pfam" id="PF13419">
    <property type="entry name" value="HAD_2"/>
    <property type="match status" value="1"/>
</dbReference>
<dbReference type="SFLD" id="SFLDS00003">
    <property type="entry name" value="Haloacid_Dehalogenase"/>
    <property type="match status" value="1"/>
</dbReference>
<dbReference type="SFLD" id="SFLDF00038">
    <property type="entry name" value="phosphonoacetaldehyde_hydrolas"/>
    <property type="match status" value="1"/>
</dbReference>
<dbReference type="SUPFAM" id="SSF56784">
    <property type="entry name" value="HAD-like"/>
    <property type="match status" value="1"/>
</dbReference>
<comment type="function">
    <text evidence="1">Involved in phosphonate degradation.</text>
</comment>
<comment type="catalytic activity">
    <reaction evidence="1">
        <text>phosphonoacetaldehyde + H2O = acetaldehyde + phosphate + H(+)</text>
        <dbReference type="Rhea" id="RHEA:18905"/>
        <dbReference type="ChEBI" id="CHEBI:15343"/>
        <dbReference type="ChEBI" id="CHEBI:15377"/>
        <dbReference type="ChEBI" id="CHEBI:15378"/>
        <dbReference type="ChEBI" id="CHEBI:43474"/>
        <dbReference type="ChEBI" id="CHEBI:58383"/>
        <dbReference type="EC" id="3.11.1.1"/>
    </reaction>
</comment>
<comment type="cofactor">
    <cofactor evidence="1">
        <name>Mg(2+)</name>
        <dbReference type="ChEBI" id="CHEBI:18420"/>
    </cofactor>
    <text evidence="1">Binds 1 Mg(2+) ion per subunit.</text>
</comment>
<comment type="subunit">
    <text evidence="1">Homodimer.</text>
</comment>
<comment type="similarity">
    <text evidence="1">Belongs to the HAD-like hydrolase superfamily. PhnX family.</text>
</comment>
<evidence type="ECO:0000255" key="1">
    <source>
        <dbReference type="HAMAP-Rule" id="MF_01375"/>
    </source>
</evidence>
<accession>B7HH80</accession>
<name>PHNX_BACC4</name>
<feature type="chain" id="PRO_1000144828" description="Phosphonoacetaldehyde hydrolase">
    <location>
        <begin position="1"/>
        <end position="264"/>
    </location>
</feature>
<feature type="active site" description="Nucleophile" evidence="1">
    <location>
        <position position="9"/>
    </location>
</feature>
<feature type="active site" description="Schiff-base intermediate with substrate" evidence="1">
    <location>
        <position position="50"/>
    </location>
</feature>
<feature type="binding site" evidence="1">
    <location>
        <position position="9"/>
    </location>
    <ligand>
        <name>Mg(2+)</name>
        <dbReference type="ChEBI" id="CHEBI:18420"/>
    </ligand>
</feature>
<feature type="binding site" evidence="1">
    <location>
        <position position="11"/>
    </location>
    <ligand>
        <name>Mg(2+)</name>
        <dbReference type="ChEBI" id="CHEBI:18420"/>
    </ligand>
</feature>
<feature type="binding site" evidence="1">
    <location>
        <position position="183"/>
    </location>
    <ligand>
        <name>Mg(2+)</name>
        <dbReference type="ChEBI" id="CHEBI:18420"/>
    </ligand>
</feature>
<organism>
    <name type="scientific">Bacillus cereus (strain B4264)</name>
    <dbReference type="NCBI Taxonomy" id="405532"/>
    <lineage>
        <taxon>Bacteria</taxon>
        <taxon>Bacillati</taxon>
        <taxon>Bacillota</taxon>
        <taxon>Bacilli</taxon>
        <taxon>Bacillales</taxon>
        <taxon>Bacillaceae</taxon>
        <taxon>Bacillus</taxon>
        <taxon>Bacillus cereus group</taxon>
    </lineage>
</organism>
<proteinExistence type="inferred from homology"/>
<keyword id="KW-0378">Hydrolase</keyword>
<keyword id="KW-0460">Magnesium</keyword>
<keyword id="KW-0479">Metal-binding</keyword>
<keyword id="KW-0704">Schiff base</keyword>
<reference key="1">
    <citation type="submission" date="2008-10" db="EMBL/GenBank/DDBJ databases">
        <title>Genome sequence of Bacillus cereus B4264.</title>
        <authorList>
            <person name="Dodson R.J."/>
            <person name="Durkin A.S."/>
            <person name="Rosovitz M.J."/>
            <person name="Rasko D.A."/>
            <person name="Hoffmaster A."/>
            <person name="Ravel J."/>
            <person name="Sutton G."/>
        </authorList>
    </citation>
    <scope>NUCLEOTIDE SEQUENCE [LARGE SCALE GENOMIC DNA]</scope>
    <source>
        <strain>B4264</strain>
    </source>
</reference>
<gene>
    <name evidence="1" type="primary">phnX</name>
    <name type="ordered locus">BCB4264_A1377</name>
</gene>
<protein>
    <recommendedName>
        <fullName evidence="1">Phosphonoacetaldehyde hydrolase</fullName>
        <shortName evidence="1">Phosphonatase</shortName>
        <ecNumber evidence="1">3.11.1.1</ecNumber>
    </recommendedName>
    <alternativeName>
        <fullName evidence="1">Phosphonoacetaldehyde phosphonohydrolase</fullName>
    </alternativeName>
</protein>
<sequence length="264" mass="30057">MKIEAVIFDWAGTTVDYGCFAPLEVFMKIFHKRGVEITAEEARKPMGLLKIDHVRALTEMPRIADEWKRVFGQLPTEADIHEMYEEFAEILFSILPSYATPIDGVKEVIASLRERGIKIGSTTGYTREMMEIVVKEAVLQGYKPDFLVTPDDVPAGRPYPWMCYKNAMELGVYPMNHMIKVGDTVSDMKEGRNAGMWTVGVILGSSELGLTEEEVESMDSVELREKIEIVRNRFVENGAHFTIETMQELENVMEHIEKQELIIS</sequence>